<accession>Q56691</accession>
<proteinExistence type="evidence at protein level"/>
<organism>
    <name type="scientific">Vibrio harveyi</name>
    <name type="common">Beneckea harveyi</name>
    <dbReference type="NCBI Taxonomy" id="669"/>
    <lineage>
        <taxon>Bacteria</taxon>
        <taxon>Pseudomonadati</taxon>
        <taxon>Pseudomonadota</taxon>
        <taxon>Gammaproteobacteria</taxon>
        <taxon>Vibrionales</taxon>
        <taxon>Vibrionaceae</taxon>
        <taxon>Vibrio</taxon>
    </lineage>
</organism>
<name>FRP_VIBHA</name>
<sequence length="240" mass="26310">MNNTIETILAHRSIRKFTAVPITDEQRQTIIQAGLAASSSSMLQVVSIVRVTDSEKRNELAQFAGNQAYVESAAEFLVFCIDYQRHATINPDVQADFTELTLIGAVDSGIMAQNCLLAAESMGLGGVYIGGLRNSAAQVDELLGLPENSAVLFGMCLGHPDQNPEVKPRLPAHVVVHENQYQELNLDDIQSYDQTMQAYYASRTSNQKLSTWSQEVTGKLAGESRPHILPYLNSKGLAKR</sequence>
<keyword id="KW-0002">3D-structure</keyword>
<keyword id="KW-0903">Direct protein sequencing</keyword>
<keyword id="KW-0285">Flavoprotein</keyword>
<keyword id="KW-0288">FMN</keyword>
<keyword id="KW-0455">Luminescence</keyword>
<keyword id="KW-0521">NADP</keyword>
<keyword id="KW-0560">Oxidoreductase</keyword>
<evidence type="ECO:0000269" key="1">
    <source>
    </source>
</evidence>
<evidence type="ECO:0000269" key="2">
    <source>
    </source>
</evidence>
<evidence type="ECO:0000303" key="3">
    <source>
    </source>
</evidence>
<evidence type="ECO:0000305" key="4"/>
<evidence type="ECO:0007744" key="5">
    <source>
        <dbReference type="PDB" id="1BKJ"/>
    </source>
</evidence>
<evidence type="ECO:0007829" key="6">
    <source>
        <dbReference type="PDB" id="1BKJ"/>
    </source>
</evidence>
<comment type="function">
    <text evidence="1">Catalyzes the NADPH-dependent reduction of FMN to FMNH(2). Involved in bioluminescence by providing FMNH(2) to luciferase.</text>
</comment>
<comment type="catalytic activity">
    <reaction evidence="1">
        <text>FMNH2 + NADP(+) = FMN + NADPH + 2 H(+)</text>
        <dbReference type="Rhea" id="RHEA:21624"/>
        <dbReference type="ChEBI" id="CHEBI:15378"/>
        <dbReference type="ChEBI" id="CHEBI:57618"/>
        <dbReference type="ChEBI" id="CHEBI:57783"/>
        <dbReference type="ChEBI" id="CHEBI:58210"/>
        <dbReference type="ChEBI" id="CHEBI:58349"/>
        <dbReference type="EC" id="1.5.1.38"/>
    </reaction>
</comment>
<comment type="biophysicochemical properties">
    <kinetics>
        <KM evidence="1">20 uM for NADPH</KM>
        <KM evidence="1">7 uM for FMN</KM>
    </kinetics>
</comment>
<comment type="subunit">
    <text evidence="2">Homodimer.</text>
</comment>
<comment type="similarity">
    <text evidence="4">Belongs to the flavin oxidoreductase frp family.</text>
</comment>
<gene>
    <name evidence="3" type="primary">frp</name>
</gene>
<dbReference type="EC" id="1.5.1.38" evidence="1"/>
<dbReference type="EMBL" id="U08996">
    <property type="protein sequence ID" value="AAA21331.1"/>
    <property type="molecule type" value="Genomic_DNA"/>
</dbReference>
<dbReference type="PDB" id="1BKJ">
    <property type="method" value="X-ray"/>
    <property type="resolution" value="1.80 A"/>
    <property type="chains" value="A/B=1-240"/>
</dbReference>
<dbReference type="PDB" id="2BKJ">
    <property type="method" value="X-ray"/>
    <property type="resolution" value="2.08 A"/>
    <property type="chains" value="A/B=1-240"/>
</dbReference>
<dbReference type="PDBsum" id="1BKJ"/>
<dbReference type="PDBsum" id="2BKJ"/>
<dbReference type="SMR" id="Q56691"/>
<dbReference type="STRING" id="669.AL538_18210"/>
<dbReference type="DrugBank" id="DB03247">
    <property type="generic name" value="Flavin mononucleotide"/>
</dbReference>
<dbReference type="KEGG" id="ag:AAA21331"/>
<dbReference type="BioCyc" id="MetaCyc:MONOMER-16933"/>
<dbReference type="BRENDA" id="1.5.1.38">
    <property type="organism ID" value="6632"/>
</dbReference>
<dbReference type="SABIO-RK" id="Q56691"/>
<dbReference type="EvolutionaryTrace" id="Q56691"/>
<dbReference type="GO" id="GO:0052873">
    <property type="term" value="F:FMN reductase (NADPH) activity"/>
    <property type="evidence" value="ECO:0007669"/>
    <property type="project" value="UniProtKB-EC"/>
</dbReference>
<dbReference type="GO" id="GO:0008218">
    <property type="term" value="P:bioluminescence"/>
    <property type="evidence" value="ECO:0007669"/>
    <property type="project" value="UniProtKB-KW"/>
</dbReference>
<dbReference type="CDD" id="cd02146">
    <property type="entry name" value="NfsA-like"/>
    <property type="match status" value="1"/>
</dbReference>
<dbReference type="Gene3D" id="3.40.109.10">
    <property type="entry name" value="NADH Oxidase"/>
    <property type="match status" value="1"/>
</dbReference>
<dbReference type="InterPro" id="IPR016446">
    <property type="entry name" value="Flavin_OxRdtase_Frp"/>
</dbReference>
<dbReference type="InterPro" id="IPR029479">
    <property type="entry name" value="Nitroreductase"/>
</dbReference>
<dbReference type="InterPro" id="IPR000415">
    <property type="entry name" value="Nitroreductase-like"/>
</dbReference>
<dbReference type="NCBIfam" id="NF008033">
    <property type="entry name" value="PRK10765.1"/>
    <property type="match status" value="1"/>
</dbReference>
<dbReference type="PANTHER" id="PTHR43425">
    <property type="entry name" value="OXYGEN-INSENSITIVE NADPH NITROREDUCTASE"/>
    <property type="match status" value="1"/>
</dbReference>
<dbReference type="PANTHER" id="PTHR43425:SF2">
    <property type="entry name" value="OXYGEN-INSENSITIVE NADPH NITROREDUCTASE"/>
    <property type="match status" value="1"/>
</dbReference>
<dbReference type="Pfam" id="PF00881">
    <property type="entry name" value="Nitroreductase"/>
    <property type="match status" value="1"/>
</dbReference>
<dbReference type="PIRSF" id="PIRSF005426">
    <property type="entry name" value="Frp"/>
    <property type="match status" value="1"/>
</dbReference>
<dbReference type="SUPFAM" id="SSF55469">
    <property type="entry name" value="FMN-dependent nitroreductase-like"/>
    <property type="match status" value="1"/>
</dbReference>
<protein>
    <recommendedName>
        <fullName evidence="3">NADPH-flavin oxidoreductase</fullName>
        <ecNumber evidence="1">1.5.1.38</ecNumber>
    </recommendedName>
    <alternativeName>
        <fullName evidence="3">Flavin reductase P</fullName>
    </alternativeName>
    <alternativeName>
        <fullName>NADPH-FMN oxidoreductase</fullName>
    </alternativeName>
</protein>
<reference key="1">
    <citation type="journal article" date="1994" name="J. Bacteriol.">
        <title>Vibrio harveyi NADPH-flavin oxidoreductase: cloning, sequencing and overexpression of the gene and purification and characterization of the cloned enzyme.</title>
        <authorList>
            <person name="Lei B."/>
            <person name="Liu M."/>
            <person name="Huang S."/>
            <person name="Tu S.-C."/>
        </authorList>
    </citation>
    <scope>NUCLEOTIDE SEQUENCE [GENOMIC DNA]</scope>
    <scope>PARTIAL PROTEIN SEQUENCE</scope>
    <scope>FUNCTION</scope>
    <scope>CATALYTIC ACTIVITY</scope>
    <scope>BIOPHYSICOCHEMICAL PROPERTIES</scope>
    <source>
        <strain>MAV</strain>
    </source>
</reference>
<reference key="2">
    <citation type="journal article" date="1996" name="Biochemistry">
        <title>Flavin reductase P: structure of a dimeric enzyme that reduces flavin.</title>
        <authorList>
            <person name="Tanner J.J."/>
            <person name="Lei B."/>
            <person name="Tu S.-C."/>
            <person name="Krause K.L."/>
        </authorList>
    </citation>
    <scope>X-RAY CRYSTALLOGRAPHY (1.8 ANGSTROMS) IN COMPLEX WITH FMN</scope>
    <scope>SUBUNIT</scope>
</reference>
<feature type="chain" id="PRO_0000205508" description="NADPH-flavin oxidoreductase">
    <location>
        <begin position="1"/>
        <end position="240"/>
    </location>
</feature>
<feature type="binding site" evidence="2 5">
    <location>
        <begin position="11"/>
        <end position="15"/>
    </location>
    <ligand>
        <name>FMN</name>
        <dbReference type="ChEBI" id="CHEBI:58210"/>
    </ligand>
</feature>
<feature type="binding site" evidence="2 5">
    <location>
        <position position="39"/>
    </location>
    <ligand>
        <name>FMN</name>
        <dbReference type="ChEBI" id="CHEBI:58210"/>
    </ligand>
</feature>
<feature type="binding site" evidence="2 5">
    <location>
        <begin position="67"/>
        <end position="69"/>
    </location>
    <ligand>
        <name>FMN</name>
        <dbReference type="ChEBI" id="CHEBI:58210"/>
    </ligand>
</feature>
<feature type="binding site" evidence="2 5">
    <location>
        <begin position="128"/>
        <end position="131"/>
    </location>
    <ligand>
        <name>FMN</name>
        <dbReference type="ChEBI" id="CHEBI:58210"/>
    </ligand>
</feature>
<feature type="binding site" evidence="2 5">
    <location>
        <begin position="167"/>
        <end position="169"/>
    </location>
    <ligand>
        <name>FMN</name>
        <dbReference type="ChEBI" id="CHEBI:58210"/>
    </ligand>
</feature>
<feature type="helix" evidence="6">
    <location>
        <begin position="3"/>
        <end position="9"/>
    </location>
</feature>
<feature type="helix" evidence="6">
    <location>
        <begin position="24"/>
        <end position="35"/>
    </location>
</feature>
<feature type="helix" evidence="6">
    <location>
        <begin position="40"/>
        <end position="42"/>
    </location>
</feature>
<feature type="strand" evidence="6">
    <location>
        <begin position="46"/>
        <end position="50"/>
    </location>
</feature>
<feature type="helix" evidence="6">
    <location>
        <begin position="54"/>
        <end position="63"/>
    </location>
</feature>
<feature type="helix" evidence="6">
    <location>
        <begin position="69"/>
        <end position="72"/>
    </location>
</feature>
<feature type="strand" evidence="6">
    <location>
        <begin position="73"/>
        <end position="82"/>
    </location>
</feature>
<feature type="helix" evidence="6">
    <location>
        <begin position="84"/>
        <end position="89"/>
    </location>
</feature>
<feature type="helix" evidence="6">
    <location>
        <begin position="98"/>
        <end position="121"/>
    </location>
</feature>
<feature type="strand" evidence="6">
    <location>
        <begin position="125"/>
        <end position="129"/>
    </location>
</feature>
<feature type="helix" evidence="6">
    <location>
        <begin position="130"/>
        <end position="135"/>
    </location>
</feature>
<feature type="helix" evidence="6">
    <location>
        <begin position="136"/>
        <end position="142"/>
    </location>
</feature>
<feature type="strand" evidence="6">
    <location>
        <begin position="149"/>
        <end position="158"/>
    </location>
</feature>
<feature type="helix" evidence="6">
    <location>
        <begin position="172"/>
        <end position="175"/>
    </location>
</feature>
<feature type="strand" evidence="6">
    <location>
        <begin position="176"/>
        <end position="180"/>
    </location>
</feature>
<feature type="helix" evidence="6">
    <location>
        <begin position="186"/>
        <end position="199"/>
    </location>
</feature>
<feature type="helix" evidence="6">
    <location>
        <begin position="212"/>
        <end position="220"/>
    </location>
</feature>
<feature type="helix" evidence="6">
    <location>
        <begin position="228"/>
        <end position="234"/>
    </location>
</feature>